<gene>
    <name evidence="6" type="primary">MAB21L4</name>
    <name evidence="6" type="synonym">C2orf54</name>
</gene>
<proteinExistence type="evidence at protein level"/>
<name>MB214_HUMAN</name>
<dbReference type="EMBL" id="AK026324">
    <property type="protein sequence ID" value="BAB15445.1"/>
    <property type="molecule type" value="mRNA"/>
</dbReference>
<dbReference type="EMBL" id="AK056601">
    <property type="protein sequence ID" value="BAG51761.1"/>
    <property type="molecule type" value="mRNA"/>
</dbReference>
<dbReference type="EMBL" id="AC104809">
    <property type="protein sequence ID" value="AAY24169.1"/>
    <property type="molecule type" value="Genomic_DNA"/>
</dbReference>
<dbReference type="EMBL" id="BC125154">
    <property type="protein sequence ID" value="AAI25155.1"/>
    <property type="molecule type" value="mRNA"/>
</dbReference>
<dbReference type="EMBL" id="BC125155">
    <property type="protein sequence ID" value="AAI25156.1"/>
    <property type="molecule type" value="mRNA"/>
</dbReference>
<dbReference type="CCDS" id="CCDS42839.1">
    <molecule id="Q08AI8-1"/>
</dbReference>
<dbReference type="CCDS" id="CCDS42840.1">
    <molecule id="Q08AI8-3"/>
</dbReference>
<dbReference type="CCDS" id="CCDS63187.1">
    <molecule id="Q08AI8-2"/>
</dbReference>
<dbReference type="RefSeq" id="NP_001078906.3">
    <molecule id="Q08AI8-1"/>
    <property type="nucleotide sequence ID" value="NM_001085437.3"/>
</dbReference>
<dbReference type="RefSeq" id="NP_001269850.2">
    <molecule id="Q08AI8-2"/>
    <property type="nucleotide sequence ID" value="NM_001282921.2"/>
</dbReference>
<dbReference type="RefSeq" id="NP_079137.4">
    <molecule id="Q08AI8-3"/>
    <property type="nucleotide sequence ID" value="NM_024861.4"/>
</dbReference>
<dbReference type="RefSeq" id="XP_011510179.1">
    <molecule id="Q08AI8-1"/>
    <property type="nucleotide sequence ID" value="XM_011511877.2"/>
</dbReference>
<dbReference type="SMR" id="Q08AI8"/>
<dbReference type="BioGRID" id="122997">
    <property type="interactions" value="21"/>
</dbReference>
<dbReference type="FunCoup" id="Q08AI8">
    <property type="interactions" value="2"/>
</dbReference>
<dbReference type="IntAct" id="Q08AI8">
    <property type="interactions" value="7"/>
</dbReference>
<dbReference type="STRING" id="9606.ENSP00000373586"/>
<dbReference type="iPTMnet" id="Q08AI8"/>
<dbReference type="PhosphoSitePlus" id="Q08AI8"/>
<dbReference type="BioMuta" id="C2orf54"/>
<dbReference type="DMDM" id="158564111"/>
<dbReference type="jPOST" id="Q08AI8"/>
<dbReference type="MassIVE" id="Q08AI8"/>
<dbReference type="PaxDb" id="9606-ENSP00000373586"/>
<dbReference type="PeptideAtlas" id="Q08AI8"/>
<dbReference type="PRIDE" id="Q08AI8"/>
<dbReference type="ProteomicsDB" id="43330"/>
<dbReference type="ProteomicsDB" id="58675">
    <molecule id="Q08AI8-1"/>
</dbReference>
<dbReference type="ProteomicsDB" id="58676">
    <molecule id="Q08AI8-2"/>
</dbReference>
<dbReference type="ProteomicsDB" id="58677">
    <molecule id="Q08AI8-3"/>
</dbReference>
<dbReference type="Antibodypedia" id="66213">
    <property type="antibodies" value="45 antibodies from 9 providers"/>
</dbReference>
<dbReference type="DNASU" id="79919"/>
<dbReference type="Ensembl" id="ENST00000307486.12">
    <molecule id="Q08AI8-2"/>
    <property type="protein sequence ID" value="ENSP00000302779.8"/>
    <property type="gene ID" value="ENSG00000172478.18"/>
</dbReference>
<dbReference type="Ensembl" id="ENST00000388934.5">
    <molecule id="Q08AI8-1"/>
    <property type="protein sequence ID" value="ENSP00000373586.4"/>
    <property type="gene ID" value="ENSG00000172478.18"/>
</dbReference>
<dbReference type="Ensembl" id="ENST00000402775.6">
    <molecule id="Q08AI8-3"/>
    <property type="protein sequence ID" value="ENSP00000385338.2"/>
    <property type="gene ID" value="ENSG00000172478.18"/>
</dbReference>
<dbReference type="GeneID" id="79919"/>
<dbReference type="KEGG" id="hsa:79919"/>
<dbReference type="MANE-Select" id="ENST00000388934.5">
    <property type="protein sequence ID" value="ENSP00000373586.4"/>
    <property type="RefSeq nucleotide sequence ID" value="NM_001085437.3"/>
    <property type="RefSeq protein sequence ID" value="NP_001078906.3"/>
</dbReference>
<dbReference type="UCSC" id="uc002wac.5">
    <molecule id="Q08AI8-1"/>
    <property type="organism name" value="human"/>
</dbReference>
<dbReference type="AGR" id="HGNC:26216"/>
<dbReference type="CTD" id="79919"/>
<dbReference type="DisGeNET" id="79919"/>
<dbReference type="GeneCards" id="MAB21L4"/>
<dbReference type="HGNC" id="HGNC:26216">
    <property type="gene designation" value="MAB21L4"/>
</dbReference>
<dbReference type="HPA" id="ENSG00000172478">
    <property type="expression patterns" value="Tissue enhanced (esophagus, vagina)"/>
</dbReference>
<dbReference type="neXtProt" id="NX_Q08AI8"/>
<dbReference type="OpenTargets" id="ENSG00000172478"/>
<dbReference type="PharmGKB" id="PA162379226"/>
<dbReference type="VEuPathDB" id="HostDB:ENSG00000172478"/>
<dbReference type="eggNOG" id="ENOG502QV1H">
    <property type="taxonomic scope" value="Eukaryota"/>
</dbReference>
<dbReference type="GeneTree" id="ENSGT01050000244827"/>
<dbReference type="HOGENOM" id="CLU_058747_0_0_1"/>
<dbReference type="InParanoid" id="Q08AI8"/>
<dbReference type="OMA" id="VHCKHHS"/>
<dbReference type="OrthoDB" id="9922809at2759"/>
<dbReference type="PAN-GO" id="Q08AI8">
    <property type="GO annotations" value="0 GO annotations based on evolutionary models"/>
</dbReference>
<dbReference type="PhylomeDB" id="Q08AI8"/>
<dbReference type="TreeFam" id="TF315012"/>
<dbReference type="PathwayCommons" id="Q08AI8"/>
<dbReference type="SignaLink" id="Q08AI8"/>
<dbReference type="BioGRID-ORCS" id="79919">
    <property type="hits" value="16 hits in 1108 CRISPR screens"/>
</dbReference>
<dbReference type="ChiTaRS" id="C2orf54">
    <property type="organism name" value="human"/>
</dbReference>
<dbReference type="GenomeRNAi" id="79919"/>
<dbReference type="Pharos" id="Q08AI8">
    <property type="development level" value="Tdark"/>
</dbReference>
<dbReference type="PRO" id="PR:Q08AI8"/>
<dbReference type="Proteomes" id="UP000005640">
    <property type="component" value="Chromosome 2"/>
</dbReference>
<dbReference type="RNAct" id="Q08AI8">
    <property type="molecule type" value="protein"/>
</dbReference>
<dbReference type="Bgee" id="ENSG00000172478">
    <property type="expression patterns" value="Expressed in lower esophagus mucosa and 123 other cell types or tissues"/>
</dbReference>
<dbReference type="ExpressionAtlas" id="Q08AI8">
    <property type="expression patterns" value="baseline and differential"/>
</dbReference>
<dbReference type="Gene3D" id="1.10.1410.40">
    <property type="match status" value="1"/>
</dbReference>
<dbReference type="InterPro" id="IPR046906">
    <property type="entry name" value="Mab-21_HhH/H2TH-like"/>
</dbReference>
<dbReference type="InterPro" id="IPR024810">
    <property type="entry name" value="MAB21L/cGLR"/>
</dbReference>
<dbReference type="PANTHER" id="PTHR10656">
    <property type="entry name" value="CELL FATE DETERMINING PROTEIN MAB21-RELATED"/>
    <property type="match status" value="1"/>
</dbReference>
<dbReference type="PANTHER" id="PTHR10656:SF7">
    <property type="entry name" value="PROTEIN MAB-21-LIKE 4"/>
    <property type="match status" value="1"/>
</dbReference>
<dbReference type="Pfam" id="PF20266">
    <property type="entry name" value="Mab-21_C"/>
    <property type="match status" value="1"/>
</dbReference>
<dbReference type="SMART" id="SM01265">
    <property type="entry name" value="Mab-21"/>
    <property type="match status" value="1"/>
</dbReference>
<protein>
    <recommendedName>
        <fullName evidence="5">Protein mab-21-like 4</fullName>
    </recommendedName>
</protein>
<reference key="1">
    <citation type="journal article" date="2004" name="Nat. Genet.">
        <title>Complete sequencing and characterization of 21,243 full-length human cDNAs.</title>
        <authorList>
            <person name="Ota T."/>
            <person name="Suzuki Y."/>
            <person name="Nishikawa T."/>
            <person name="Otsuki T."/>
            <person name="Sugiyama T."/>
            <person name="Irie R."/>
            <person name="Wakamatsu A."/>
            <person name="Hayashi K."/>
            <person name="Sato H."/>
            <person name="Nagai K."/>
            <person name="Kimura K."/>
            <person name="Makita H."/>
            <person name="Sekine M."/>
            <person name="Obayashi M."/>
            <person name="Nishi T."/>
            <person name="Shibahara T."/>
            <person name="Tanaka T."/>
            <person name="Ishii S."/>
            <person name="Yamamoto J."/>
            <person name="Saito K."/>
            <person name="Kawai Y."/>
            <person name="Isono Y."/>
            <person name="Nakamura Y."/>
            <person name="Nagahari K."/>
            <person name="Murakami K."/>
            <person name="Yasuda T."/>
            <person name="Iwayanagi T."/>
            <person name="Wagatsuma M."/>
            <person name="Shiratori A."/>
            <person name="Sudo H."/>
            <person name="Hosoiri T."/>
            <person name="Kaku Y."/>
            <person name="Kodaira H."/>
            <person name="Kondo H."/>
            <person name="Sugawara M."/>
            <person name="Takahashi M."/>
            <person name="Kanda K."/>
            <person name="Yokoi T."/>
            <person name="Furuya T."/>
            <person name="Kikkawa E."/>
            <person name="Omura Y."/>
            <person name="Abe K."/>
            <person name="Kamihara K."/>
            <person name="Katsuta N."/>
            <person name="Sato K."/>
            <person name="Tanikawa M."/>
            <person name="Yamazaki M."/>
            <person name="Ninomiya K."/>
            <person name="Ishibashi T."/>
            <person name="Yamashita H."/>
            <person name="Murakawa K."/>
            <person name="Fujimori K."/>
            <person name="Tanai H."/>
            <person name="Kimata M."/>
            <person name="Watanabe M."/>
            <person name="Hiraoka S."/>
            <person name="Chiba Y."/>
            <person name="Ishida S."/>
            <person name="Ono Y."/>
            <person name="Takiguchi S."/>
            <person name="Watanabe S."/>
            <person name="Yosida M."/>
            <person name="Hotuta T."/>
            <person name="Kusano J."/>
            <person name="Kanehori K."/>
            <person name="Takahashi-Fujii A."/>
            <person name="Hara H."/>
            <person name="Tanase T.-O."/>
            <person name="Nomura Y."/>
            <person name="Togiya S."/>
            <person name="Komai F."/>
            <person name="Hara R."/>
            <person name="Takeuchi K."/>
            <person name="Arita M."/>
            <person name="Imose N."/>
            <person name="Musashino K."/>
            <person name="Yuuki H."/>
            <person name="Oshima A."/>
            <person name="Sasaki N."/>
            <person name="Aotsuka S."/>
            <person name="Yoshikawa Y."/>
            <person name="Matsunawa H."/>
            <person name="Ichihara T."/>
            <person name="Shiohata N."/>
            <person name="Sano S."/>
            <person name="Moriya S."/>
            <person name="Momiyama H."/>
            <person name="Satoh N."/>
            <person name="Takami S."/>
            <person name="Terashima Y."/>
            <person name="Suzuki O."/>
            <person name="Nakagawa S."/>
            <person name="Senoh A."/>
            <person name="Mizoguchi H."/>
            <person name="Goto Y."/>
            <person name="Shimizu F."/>
            <person name="Wakebe H."/>
            <person name="Hishigaki H."/>
            <person name="Watanabe T."/>
            <person name="Sugiyama A."/>
            <person name="Takemoto M."/>
            <person name="Kawakami B."/>
            <person name="Yamazaki M."/>
            <person name="Watanabe K."/>
            <person name="Kumagai A."/>
            <person name="Itakura S."/>
            <person name="Fukuzumi Y."/>
            <person name="Fujimori Y."/>
            <person name="Komiyama M."/>
            <person name="Tashiro H."/>
            <person name="Tanigami A."/>
            <person name="Fujiwara T."/>
            <person name="Ono T."/>
            <person name="Yamada K."/>
            <person name="Fujii Y."/>
            <person name="Ozaki K."/>
            <person name="Hirao M."/>
            <person name="Ohmori Y."/>
            <person name="Kawabata A."/>
            <person name="Hikiji T."/>
            <person name="Kobatake N."/>
            <person name="Inagaki H."/>
            <person name="Ikema Y."/>
            <person name="Okamoto S."/>
            <person name="Okitani R."/>
            <person name="Kawakami T."/>
            <person name="Noguchi S."/>
            <person name="Itoh T."/>
            <person name="Shigeta K."/>
            <person name="Senba T."/>
            <person name="Matsumura K."/>
            <person name="Nakajima Y."/>
            <person name="Mizuno T."/>
            <person name="Morinaga M."/>
            <person name="Sasaki M."/>
            <person name="Togashi T."/>
            <person name="Oyama M."/>
            <person name="Hata H."/>
            <person name="Watanabe M."/>
            <person name="Komatsu T."/>
            <person name="Mizushima-Sugano J."/>
            <person name="Satoh T."/>
            <person name="Shirai Y."/>
            <person name="Takahashi Y."/>
            <person name="Nakagawa K."/>
            <person name="Okumura K."/>
            <person name="Nagase T."/>
            <person name="Nomura N."/>
            <person name="Kikuchi H."/>
            <person name="Masuho Y."/>
            <person name="Yamashita R."/>
            <person name="Nakai K."/>
            <person name="Yada T."/>
            <person name="Nakamura Y."/>
            <person name="Ohara O."/>
            <person name="Isogai T."/>
            <person name="Sugano S."/>
        </authorList>
    </citation>
    <scope>NUCLEOTIDE SEQUENCE [LARGE SCALE MRNA] (ISOFORMS 1 AND 3)</scope>
    <scope>VARIANT PRO-309</scope>
    <source>
        <tissue>Small intestine</tissue>
        <tissue>Tongue</tissue>
    </source>
</reference>
<reference key="2">
    <citation type="journal article" date="2005" name="Nature">
        <title>Generation and annotation of the DNA sequences of human chromosomes 2 and 4.</title>
        <authorList>
            <person name="Hillier L.W."/>
            <person name="Graves T.A."/>
            <person name="Fulton R.S."/>
            <person name="Fulton L.A."/>
            <person name="Pepin K.H."/>
            <person name="Minx P."/>
            <person name="Wagner-McPherson C."/>
            <person name="Layman D."/>
            <person name="Wylie K."/>
            <person name="Sekhon M."/>
            <person name="Becker M.C."/>
            <person name="Fewell G.A."/>
            <person name="Delehaunty K.D."/>
            <person name="Miner T.L."/>
            <person name="Nash W.E."/>
            <person name="Kremitzki C."/>
            <person name="Oddy L."/>
            <person name="Du H."/>
            <person name="Sun H."/>
            <person name="Bradshaw-Cordum H."/>
            <person name="Ali J."/>
            <person name="Carter J."/>
            <person name="Cordes M."/>
            <person name="Harris A."/>
            <person name="Isak A."/>
            <person name="van Brunt A."/>
            <person name="Nguyen C."/>
            <person name="Du F."/>
            <person name="Courtney L."/>
            <person name="Kalicki J."/>
            <person name="Ozersky P."/>
            <person name="Abbott S."/>
            <person name="Armstrong J."/>
            <person name="Belter E.A."/>
            <person name="Caruso L."/>
            <person name="Cedroni M."/>
            <person name="Cotton M."/>
            <person name="Davidson T."/>
            <person name="Desai A."/>
            <person name="Elliott G."/>
            <person name="Erb T."/>
            <person name="Fronick C."/>
            <person name="Gaige T."/>
            <person name="Haakenson W."/>
            <person name="Haglund K."/>
            <person name="Holmes A."/>
            <person name="Harkins R."/>
            <person name="Kim K."/>
            <person name="Kruchowski S.S."/>
            <person name="Strong C.M."/>
            <person name="Grewal N."/>
            <person name="Goyea E."/>
            <person name="Hou S."/>
            <person name="Levy A."/>
            <person name="Martinka S."/>
            <person name="Mead K."/>
            <person name="McLellan M.D."/>
            <person name="Meyer R."/>
            <person name="Randall-Maher J."/>
            <person name="Tomlinson C."/>
            <person name="Dauphin-Kohlberg S."/>
            <person name="Kozlowicz-Reilly A."/>
            <person name="Shah N."/>
            <person name="Swearengen-Shahid S."/>
            <person name="Snider J."/>
            <person name="Strong J.T."/>
            <person name="Thompson J."/>
            <person name="Yoakum M."/>
            <person name="Leonard S."/>
            <person name="Pearman C."/>
            <person name="Trani L."/>
            <person name="Radionenko M."/>
            <person name="Waligorski J.E."/>
            <person name="Wang C."/>
            <person name="Rock S.M."/>
            <person name="Tin-Wollam A.-M."/>
            <person name="Maupin R."/>
            <person name="Latreille P."/>
            <person name="Wendl M.C."/>
            <person name="Yang S.-P."/>
            <person name="Pohl C."/>
            <person name="Wallis J.W."/>
            <person name="Spieth J."/>
            <person name="Bieri T.A."/>
            <person name="Berkowicz N."/>
            <person name="Nelson J.O."/>
            <person name="Osborne J."/>
            <person name="Ding L."/>
            <person name="Meyer R."/>
            <person name="Sabo A."/>
            <person name="Shotland Y."/>
            <person name="Sinha P."/>
            <person name="Wohldmann P.E."/>
            <person name="Cook L.L."/>
            <person name="Hickenbotham M.T."/>
            <person name="Eldred J."/>
            <person name="Williams D."/>
            <person name="Jones T.A."/>
            <person name="She X."/>
            <person name="Ciccarelli F.D."/>
            <person name="Izaurralde E."/>
            <person name="Taylor J."/>
            <person name="Schmutz J."/>
            <person name="Myers R.M."/>
            <person name="Cox D.R."/>
            <person name="Huang X."/>
            <person name="McPherson J.D."/>
            <person name="Mardis E.R."/>
            <person name="Clifton S.W."/>
            <person name="Warren W.C."/>
            <person name="Chinwalla A.T."/>
            <person name="Eddy S.R."/>
            <person name="Marra M.A."/>
            <person name="Ovcharenko I."/>
            <person name="Furey T.S."/>
            <person name="Miller W."/>
            <person name="Eichler E.E."/>
            <person name="Bork P."/>
            <person name="Suyama M."/>
            <person name="Torrents D."/>
            <person name="Waterston R.H."/>
            <person name="Wilson R.K."/>
        </authorList>
    </citation>
    <scope>NUCLEOTIDE SEQUENCE [LARGE SCALE GENOMIC DNA]</scope>
</reference>
<reference key="3">
    <citation type="journal article" date="2004" name="Genome Res.">
        <title>The status, quality, and expansion of the NIH full-length cDNA project: the Mammalian Gene Collection (MGC).</title>
        <authorList>
            <consortium name="The MGC Project Team"/>
        </authorList>
    </citation>
    <scope>NUCLEOTIDE SEQUENCE [LARGE SCALE MRNA] (ISOFORM 2)</scope>
    <scope>VARIANT PRO-309</scope>
</reference>
<accession>Q08AI8</accession>
<accession>B3KPP9</accession>
<accession>H7BXM3</accession>
<accession>Q08AI9</accession>
<accession>Q53QU5</accession>
<accession>Q9H622</accession>
<keyword id="KW-0025">Alternative splicing</keyword>
<keyword id="KW-1267">Proteomics identification</keyword>
<keyword id="KW-1185">Reference proteome</keyword>
<organism>
    <name type="scientific">Homo sapiens</name>
    <name type="common">Human</name>
    <dbReference type="NCBI Taxonomy" id="9606"/>
    <lineage>
        <taxon>Eukaryota</taxon>
        <taxon>Metazoa</taxon>
        <taxon>Chordata</taxon>
        <taxon>Craniata</taxon>
        <taxon>Vertebrata</taxon>
        <taxon>Euteleostomi</taxon>
        <taxon>Mammalia</taxon>
        <taxon>Eutheria</taxon>
        <taxon>Euarchontoglires</taxon>
        <taxon>Primates</taxon>
        <taxon>Haplorrhini</taxon>
        <taxon>Catarrhini</taxon>
        <taxon>Hominidae</taxon>
        <taxon>Homo</taxon>
    </lineage>
</organism>
<feature type="chain" id="PRO_0000288449" description="Protein mab-21-like 4">
    <location>
        <begin position="1"/>
        <end position="447"/>
    </location>
</feature>
<feature type="splice variant" id="VSP_025679" description="In isoform 3." evidence="3">
    <location>
        <begin position="1"/>
        <end position="168"/>
    </location>
</feature>
<feature type="splice variant" id="VSP_025680" description="In isoform 2." evidence="4">
    <location>
        <begin position="1"/>
        <end position="149"/>
    </location>
</feature>
<feature type="splice variant" id="VSP_025681" description="In isoform 2." evidence="4">
    <original>CVLKDLLVAAIVHCKHHSLIAP</original>
    <variation>MDTGVWGWGAAACRWGPAERAA</variation>
    <location>
        <begin position="150"/>
        <end position="171"/>
    </location>
</feature>
<feature type="splice variant" id="VSP_025682" description="In isoform 3." evidence="3">
    <original>IAP</original>
    <variation>MDT</variation>
    <location>
        <begin position="169"/>
        <end position="171"/>
    </location>
</feature>
<feature type="sequence variant" id="VAR_050714" description="In dbSNP:rs4359646.">
    <original>A</original>
    <variation>T</variation>
    <location>
        <position position="170"/>
    </location>
</feature>
<feature type="sequence variant" id="VAR_032419" description="In dbSNP:rs6707568." evidence="1 2">
    <original>L</original>
    <variation>P</variation>
    <location>
        <position position="309"/>
    </location>
</feature>
<feature type="sequence conflict" description="In Ref. 1; BAB15445." evidence="5" ref="1">
    <original>S</original>
    <variation>P</variation>
    <location>
        <position position="173"/>
    </location>
</feature>
<feature type="sequence conflict" description="In Ref. 1; BAB15445." evidence="5" ref="1">
    <original>L</original>
    <variation>P</variation>
    <location>
        <position position="317"/>
    </location>
</feature>
<feature type="sequence conflict" description="In Ref. 3; AAI25156." evidence="5" ref="3">
    <original>A</original>
    <variation>S</variation>
    <location sequence="Q08AI8-2">
        <position position="11"/>
    </location>
</feature>
<feature type="sequence conflict" description="In Ref. 3; AAI25155/AAI25156." evidence="5" ref="3">
    <original>A</original>
    <variation>P</variation>
    <location sequence="Q08AI8-2">
        <position position="21"/>
    </location>
</feature>
<sequence length="447" mass="49565">MPAPALPTSAMAVQVPLWHHYLQAIRSREAPRAQDFQRAENVLLTVLERVHALDPRFIVDYSRGLEAFQFALRSSEDPMDMEVPLWVDAEALLIEEPEATQPEDGLELCHLGVPREGAGLERWTTEDTFTASSEGDAKCRGHIVPSKVLCVLKDLLVAAIVHCKHHSLIAPGSLNAASLREEQLHLSLLVSSGWRTISFHVVPVVRRKLGAPALEGVQQMPGFPEGSLRRILSQGVDLVPASAQLWRTSTDYLLTRLLGELGSLQGHRLDSLSILDRVNHESWRDSGQTDGLTFGHLKMVLLWASVLFLAPEDWAELQGAVYRLLVVLLCCLATRKLPHFLHPQRNLLQGSGLDLGAIYQRVEGFASQPEAALRIHATHLGRSPPPRIGSGLKALLQLPASDPTYWATAYFDVLLDKFQVFNIQDKDRISAMQSIFQKTRTLGGEES</sequence>
<evidence type="ECO:0000269" key="1">
    <source>
    </source>
</evidence>
<evidence type="ECO:0000269" key="2">
    <source>
    </source>
</evidence>
<evidence type="ECO:0000303" key="3">
    <source>
    </source>
</evidence>
<evidence type="ECO:0000303" key="4">
    <source>
    </source>
</evidence>
<evidence type="ECO:0000305" key="5"/>
<evidence type="ECO:0000312" key="6">
    <source>
        <dbReference type="HGNC" id="HGNC:26216"/>
    </source>
</evidence>
<comment type="alternative products">
    <event type="alternative splicing"/>
    <isoform>
        <id>Q08AI8-1</id>
        <name>1</name>
        <sequence type="displayed"/>
    </isoform>
    <isoform>
        <id>Q08AI8-2</id>
        <name>2</name>
        <sequence type="described" ref="VSP_025680 VSP_025681"/>
    </isoform>
    <isoform>
        <id>Q08AI8-3</id>
        <name>3</name>
        <sequence type="described" ref="VSP_025679 VSP_025682"/>
    </isoform>
</comment>